<gene>
    <name type="primary">RPP2C</name>
    <name type="ordered locus">At3g28500</name>
    <name type="ORF">T20D4.1</name>
</gene>
<accession>Q9LH85</accession>
<reference key="1">
    <citation type="journal article" date="2000" name="DNA Res.">
        <title>Structural analysis of Arabidopsis thaliana chromosome 3. II. Sequence features of the 4,251,695 bp regions covered by 90 P1, TAC and BAC clones.</title>
        <authorList>
            <person name="Kaneko T."/>
            <person name="Katoh T."/>
            <person name="Sato S."/>
            <person name="Nakamura Y."/>
            <person name="Asamizu E."/>
            <person name="Tabata S."/>
        </authorList>
    </citation>
    <scope>NUCLEOTIDE SEQUENCE [LARGE SCALE GENOMIC DNA]</scope>
    <source>
        <strain>cv. Columbia</strain>
    </source>
</reference>
<reference key="2">
    <citation type="journal article" date="2017" name="Plant J.">
        <title>Araport11: a complete reannotation of the Arabidopsis thaliana reference genome.</title>
        <authorList>
            <person name="Cheng C.Y."/>
            <person name="Krishnakumar V."/>
            <person name="Chan A.P."/>
            <person name="Thibaud-Nissen F."/>
            <person name="Schobel S."/>
            <person name="Town C.D."/>
        </authorList>
    </citation>
    <scope>GENOME REANNOTATION</scope>
    <source>
        <strain>cv. Columbia</strain>
    </source>
</reference>
<reference key="3">
    <citation type="journal article" date="2003" name="Science">
        <title>Empirical analysis of transcriptional activity in the Arabidopsis genome.</title>
        <authorList>
            <person name="Yamada K."/>
            <person name="Lim J."/>
            <person name="Dale J.M."/>
            <person name="Chen H."/>
            <person name="Shinn P."/>
            <person name="Palm C.J."/>
            <person name="Southwick A.M."/>
            <person name="Wu H.C."/>
            <person name="Kim C.J."/>
            <person name="Nguyen M."/>
            <person name="Pham P.K."/>
            <person name="Cheuk R.F."/>
            <person name="Karlin-Newmann G."/>
            <person name="Liu S.X."/>
            <person name="Lam B."/>
            <person name="Sakano H."/>
            <person name="Wu T."/>
            <person name="Yu G."/>
            <person name="Miranda M."/>
            <person name="Quach H.L."/>
            <person name="Tripp M."/>
            <person name="Chang C.H."/>
            <person name="Lee J.M."/>
            <person name="Toriumi M.J."/>
            <person name="Chan M.M."/>
            <person name="Tang C.C."/>
            <person name="Onodera C.S."/>
            <person name="Deng J.M."/>
            <person name="Akiyama K."/>
            <person name="Ansari Y."/>
            <person name="Arakawa T."/>
            <person name="Banh J."/>
            <person name="Banno F."/>
            <person name="Bowser L."/>
            <person name="Brooks S.Y."/>
            <person name="Carninci P."/>
            <person name="Chao Q."/>
            <person name="Choy N."/>
            <person name="Enju A."/>
            <person name="Goldsmith A.D."/>
            <person name="Gurjal M."/>
            <person name="Hansen N.F."/>
            <person name="Hayashizaki Y."/>
            <person name="Johnson-Hopson C."/>
            <person name="Hsuan V.W."/>
            <person name="Iida K."/>
            <person name="Karnes M."/>
            <person name="Khan S."/>
            <person name="Koesema E."/>
            <person name="Ishida J."/>
            <person name="Jiang P.X."/>
            <person name="Jones T."/>
            <person name="Kawai J."/>
            <person name="Kamiya A."/>
            <person name="Meyers C."/>
            <person name="Nakajima M."/>
            <person name="Narusaka M."/>
            <person name="Seki M."/>
            <person name="Sakurai T."/>
            <person name="Satou M."/>
            <person name="Tamse R."/>
            <person name="Vaysberg M."/>
            <person name="Wallender E.K."/>
            <person name="Wong C."/>
            <person name="Yamamura Y."/>
            <person name="Yuan S."/>
            <person name="Shinozaki K."/>
            <person name="Davis R.W."/>
            <person name="Theologis A."/>
            <person name="Ecker J.R."/>
        </authorList>
    </citation>
    <scope>NUCLEOTIDE SEQUENCE [LARGE SCALE MRNA]</scope>
    <source>
        <strain>cv. Columbia</strain>
    </source>
</reference>
<reference key="4">
    <citation type="submission" date="2002-03" db="EMBL/GenBank/DDBJ databases">
        <title>Full-length cDNA from Arabidopsis thaliana.</title>
        <authorList>
            <person name="Brover V.V."/>
            <person name="Troukhan M.E."/>
            <person name="Alexandrov N.A."/>
            <person name="Lu Y.-P."/>
            <person name="Flavell R.B."/>
            <person name="Feldmann K.A."/>
        </authorList>
    </citation>
    <scope>NUCLEOTIDE SEQUENCE [LARGE SCALE MRNA]</scope>
</reference>
<reference key="5">
    <citation type="journal article" date="2001" name="Plant Physiol.">
        <title>The organization of cytoplasmic ribosomal protein genes in the Arabidopsis genome.</title>
        <authorList>
            <person name="Barakat A."/>
            <person name="Szick-Miranda K."/>
            <person name="Chang I.-F."/>
            <person name="Guyot R."/>
            <person name="Blanc G."/>
            <person name="Cooke R."/>
            <person name="Delseny M."/>
            <person name="Bailey-Serres J."/>
        </authorList>
    </citation>
    <scope>GENE FAMILY ORGANIZATION</scope>
    <scope>NOMENCLATURE</scope>
</reference>
<reference key="6">
    <citation type="journal article" date="2008" name="J. Proteome Res.">
        <title>Site-specific phosphorylation profiling of Arabidopsis proteins by mass spectrometry and peptide chip analysis.</title>
        <authorList>
            <person name="de la Fuente van Bentem S."/>
            <person name="Anrather D."/>
            <person name="Dohnal I."/>
            <person name="Roitinger E."/>
            <person name="Csaszar E."/>
            <person name="Joore J."/>
            <person name="Buijnink J."/>
            <person name="Carreri A."/>
            <person name="Forzani C."/>
            <person name="Lorkovic Z.J."/>
            <person name="Barta A."/>
            <person name="Lecourieux D."/>
            <person name="Verhounig A."/>
            <person name="Jonak C."/>
            <person name="Hirt H."/>
        </authorList>
    </citation>
    <scope>PHOSPHORYLATION [LARGE SCALE ANALYSIS] AT SER-104 AND SER-105</scope>
    <scope>IDENTIFICATION BY MASS SPECTROMETRY [LARGE SCALE ANALYSIS]</scope>
    <source>
        <tissue>Root</tissue>
    </source>
</reference>
<reference key="7">
    <citation type="journal article" date="2023" name="Plant Cell">
        <title>An updated nomenclature for plant ribosomal protein genes.</title>
        <authorList>
            <person name="Scarpin M.R."/>
            <person name="Busche M."/>
            <person name="Martinez R.E."/>
            <person name="Harper L.C."/>
            <person name="Reiser L."/>
            <person name="Szakonyi D."/>
            <person name="Merchante C."/>
            <person name="Lan T."/>
            <person name="Xiong W."/>
            <person name="Mo B."/>
            <person name="Tang G."/>
            <person name="Chen X."/>
            <person name="Bailey-Serres J."/>
            <person name="Browning K.S."/>
            <person name="Brunkard J.O."/>
        </authorList>
    </citation>
    <scope>NOMENCLATURE</scope>
</reference>
<proteinExistence type="evidence at protein level"/>
<evidence type="ECO:0000250" key="1"/>
<evidence type="ECO:0000256" key="2">
    <source>
        <dbReference type="SAM" id="MobiDB-lite"/>
    </source>
</evidence>
<evidence type="ECO:0000303" key="3">
    <source>
    </source>
</evidence>
<evidence type="ECO:0000305" key="4"/>
<evidence type="ECO:0007744" key="5">
    <source>
    </source>
</evidence>
<dbReference type="EMBL" id="AP002059">
    <property type="protein sequence ID" value="BAB01952.1"/>
    <property type="molecule type" value="Genomic_DNA"/>
</dbReference>
<dbReference type="EMBL" id="CP002686">
    <property type="protein sequence ID" value="AEE77453.1"/>
    <property type="molecule type" value="Genomic_DNA"/>
</dbReference>
<dbReference type="EMBL" id="BT003971">
    <property type="protein sequence ID" value="AAO42015.1"/>
    <property type="molecule type" value="mRNA"/>
</dbReference>
<dbReference type="EMBL" id="BT005087">
    <property type="protein sequence ID" value="AAO50620.1"/>
    <property type="molecule type" value="mRNA"/>
</dbReference>
<dbReference type="EMBL" id="AY086773">
    <property type="protein sequence ID" value="AAM63824.1"/>
    <property type="molecule type" value="mRNA"/>
</dbReference>
<dbReference type="RefSeq" id="NP_189491.1">
    <property type="nucleotide sequence ID" value="NM_113770.3"/>
</dbReference>
<dbReference type="SMR" id="Q9LH85"/>
<dbReference type="BioGRID" id="7809">
    <property type="interactions" value="1"/>
</dbReference>
<dbReference type="FunCoup" id="Q9LH85">
    <property type="interactions" value="258"/>
</dbReference>
<dbReference type="STRING" id="3702.Q9LH85"/>
<dbReference type="iPTMnet" id="Q9LH85"/>
<dbReference type="PaxDb" id="3702-AT3G28500.1"/>
<dbReference type="ProteomicsDB" id="228018"/>
<dbReference type="EnsemblPlants" id="AT3G28500.1">
    <property type="protein sequence ID" value="AT3G28500.1"/>
    <property type="gene ID" value="AT3G28500"/>
</dbReference>
<dbReference type="GeneID" id="822480"/>
<dbReference type="Gramene" id="AT3G28500.1">
    <property type="protein sequence ID" value="AT3G28500.1"/>
    <property type="gene ID" value="AT3G28500"/>
</dbReference>
<dbReference type="KEGG" id="ath:AT3G28500"/>
<dbReference type="Araport" id="AT3G28500"/>
<dbReference type="TAIR" id="AT3G28500"/>
<dbReference type="eggNOG" id="KOG3449">
    <property type="taxonomic scope" value="Eukaryota"/>
</dbReference>
<dbReference type="HOGENOM" id="CLU_114656_0_2_1"/>
<dbReference type="InParanoid" id="Q9LH85"/>
<dbReference type="OMA" id="NIMCFIC"/>
<dbReference type="OrthoDB" id="1227494at2759"/>
<dbReference type="PhylomeDB" id="Q9LH85"/>
<dbReference type="CD-CODE" id="4299E36E">
    <property type="entry name" value="Nucleolus"/>
</dbReference>
<dbReference type="PRO" id="PR:Q9LH85"/>
<dbReference type="Proteomes" id="UP000006548">
    <property type="component" value="Chromosome 3"/>
</dbReference>
<dbReference type="ExpressionAtlas" id="Q9LH85">
    <property type="expression patterns" value="baseline and differential"/>
</dbReference>
<dbReference type="GO" id="GO:0022625">
    <property type="term" value="C:cytosolic large ribosomal subunit"/>
    <property type="evidence" value="ECO:0007669"/>
    <property type="project" value="InterPro"/>
</dbReference>
<dbReference type="GO" id="GO:0022626">
    <property type="term" value="C:cytosolic ribosome"/>
    <property type="evidence" value="ECO:0007005"/>
    <property type="project" value="TAIR"/>
</dbReference>
<dbReference type="GO" id="GO:0003735">
    <property type="term" value="F:structural constituent of ribosome"/>
    <property type="evidence" value="ECO:0000314"/>
    <property type="project" value="CAFA"/>
</dbReference>
<dbReference type="GO" id="GO:0002182">
    <property type="term" value="P:cytoplasmic translational elongation"/>
    <property type="evidence" value="ECO:0007669"/>
    <property type="project" value="InterPro"/>
</dbReference>
<dbReference type="CDD" id="cd05833">
    <property type="entry name" value="Ribosomal_P2"/>
    <property type="match status" value="1"/>
</dbReference>
<dbReference type="FunFam" id="1.10.10.1410:FF:000002">
    <property type="entry name" value="60S acidic ribosomal protein P2"/>
    <property type="match status" value="1"/>
</dbReference>
<dbReference type="Gene3D" id="1.10.10.1410">
    <property type="match status" value="1"/>
</dbReference>
<dbReference type="HAMAP" id="MF_01478">
    <property type="entry name" value="Ribosomal_L12_arch"/>
    <property type="match status" value="1"/>
</dbReference>
<dbReference type="InterPro" id="IPR038716">
    <property type="entry name" value="P1/P2_N_sf"/>
</dbReference>
<dbReference type="InterPro" id="IPR027534">
    <property type="entry name" value="Ribosomal_P1/P2"/>
</dbReference>
<dbReference type="InterPro" id="IPR044076">
    <property type="entry name" value="Ribosomal_P2"/>
</dbReference>
<dbReference type="PANTHER" id="PTHR21141">
    <property type="entry name" value="60S ACIDIC RIBOSOMAL PROTEIN FAMILY MEMBER"/>
    <property type="match status" value="1"/>
</dbReference>
<dbReference type="PANTHER" id="PTHR21141:SF84">
    <property type="entry name" value="LARGE RIBOSOMAL SUBUNIT PROTEIN P2X"/>
    <property type="match status" value="1"/>
</dbReference>
<dbReference type="Pfam" id="PF00428">
    <property type="entry name" value="Ribosomal_60s"/>
    <property type="match status" value="1"/>
</dbReference>
<name>RLA23_ARATH</name>
<sequence length="115" mass="11735">MKVIAAFLLAKLGGNENPTSNDLKKILESVGAEIDETKIDLLFSLIKDHDVTELIAAGREKMSALSSGGPAVAMVAGGGGGGAASAAEPVAESKKKVEEVKDESSDDAGMMGLFD</sequence>
<keyword id="KW-0597">Phosphoprotein</keyword>
<keyword id="KW-1185">Reference proteome</keyword>
<keyword id="KW-0687">Ribonucleoprotein</keyword>
<keyword id="KW-0689">Ribosomal protein</keyword>
<feature type="chain" id="PRO_0000245776" description="Large ribosomal subunit protein P2x">
    <location>
        <begin position="1"/>
        <end position="115"/>
    </location>
</feature>
<feature type="region of interest" description="Disordered" evidence="2">
    <location>
        <begin position="78"/>
        <end position="115"/>
    </location>
</feature>
<feature type="compositionally biased region" description="Basic and acidic residues" evidence="2">
    <location>
        <begin position="91"/>
        <end position="103"/>
    </location>
</feature>
<feature type="modified residue" description="Phosphoserine" evidence="5">
    <location>
        <position position="104"/>
    </location>
</feature>
<feature type="modified residue" description="Phosphoserine" evidence="5">
    <location>
        <position position="105"/>
    </location>
</feature>
<organism>
    <name type="scientific">Arabidopsis thaliana</name>
    <name type="common">Mouse-ear cress</name>
    <dbReference type="NCBI Taxonomy" id="3702"/>
    <lineage>
        <taxon>Eukaryota</taxon>
        <taxon>Viridiplantae</taxon>
        <taxon>Streptophyta</taxon>
        <taxon>Embryophyta</taxon>
        <taxon>Tracheophyta</taxon>
        <taxon>Spermatophyta</taxon>
        <taxon>Magnoliopsida</taxon>
        <taxon>eudicotyledons</taxon>
        <taxon>Gunneridae</taxon>
        <taxon>Pentapetalae</taxon>
        <taxon>rosids</taxon>
        <taxon>malvids</taxon>
        <taxon>Brassicales</taxon>
        <taxon>Brassicaceae</taxon>
        <taxon>Camelineae</taxon>
        <taxon>Arabidopsis</taxon>
    </lineage>
</organism>
<protein>
    <recommendedName>
        <fullName evidence="3">Large ribosomal subunit protein P2x</fullName>
    </recommendedName>
    <alternativeName>
        <fullName>60S acidic ribosomal protein P2-3</fullName>
    </alternativeName>
</protein>
<comment type="function">
    <text evidence="1">Plays an important role in the elongation step of protein synthesis.</text>
</comment>
<comment type="subunit">
    <text>P1 and P2 exist as dimers at the large ribosomal subunit.</text>
</comment>
<comment type="similarity">
    <text evidence="4">Belongs to the eukaryotic ribosomal protein P1/P2 family.</text>
</comment>